<gene>
    <name evidence="5" type="primary">gvpI</name>
    <name type="ordered locus">HFX_1702</name>
</gene>
<keyword id="KW-0304">Gas vesicle</keyword>
<dbReference type="EMBL" id="X64701">
    <property type="protein sequence ID" value="CAA45951.1"/>
    <property type="molecule type" value="Genomic_DNA"/>
</dbReference>
<dbReference type="EMBL" id="CP001868">
    <property type="protein sequence ID" value="AFK19408.1"/>
    <property type="molecule type" value="Genomic_DNA"/>
</dbReference>
<dbReference type="PIR" id="S28122">
    <property type="entry name" value="S28122"/>
</dbReference>
<dbReference type="RefSeq" id="WP_004056700.1">
    <property type="nucleotide sequence ID" value="NC_017941.2"/>
</dbReference>
<dbReference type="SMR" id="Q02234"/>
<dbReference type="STRING" id="523841.HFX_1702"/>
<dbReference type="PaxDb" id="523841-HFX_1702"/>
<dbReference type="GeneID" id="40157057"/>
<dbReference type="KEGG" id="hme:HFX_1702"/>
<dbReference type="eggNOG" id="arCOG06391">
    <property type="taxonomic scope" value="Archaea"/>
</dbReference>
<dbReference type="HOGENOM" id="CLU_147792_0_0_2"/>
<dbReference type="OrthoDB" id="351320at2157"/>
<dbReference type="Proteomes" id="UP000006469">
    <property type="component" value="Chromosome"/>
</dbReference>
<dbReference type="GO" id="GO:0031411">
    <property type="term" value="C:gas vesicle"/>
    <property type="evidence" value="ECO:0007669"/>
    <property type="project" value="UniProtKB-SubCell"/>
</dbReference>
<evidence type="ECO:0000250" key="1">
    <source>
        <dbReference type="UniProtKB" id="Q9HI24"/>
    </source>
</evidence>
<evidence type="ECO:0000256" key="2">
    <source>
        <dbReference type="SAM" id="MobiDB-lite"/>
    </source>
</evidence>
<evidence type="ECO:0000269" key="3">
    <source>
    </source>
</evidence>
<evidence type="ECO:0000269" key="4">
    <source>
    </source>
</evidence>
<evidence type="ECO:0000303" key="5">
    <source>
    </source>
</evidence>
<evidence type="ECO:0000305" key="6"/>
<sequence>MTGKQHQKHEQKARQAQVKAQINRDKARSKLLRQREKLARRRARNRRQSEVRRGNQSKAQHDTQSETQRGTQSKSQRDNETGGTKNPTAHSTLPPQKTNAENAVRNSHSTVPELPKYSSVPARERLYGLRLHRETTASEDKSVTVAVTRAPKAERQRGGADE</sequence>
<feature type="chain" id="PRO_0000182689" description="Gas vesicle protein I">
    <location>
        <begin position="1"/>
        <end position="162"/>
    </location>
</feature>
<feature type="region of interest" description="Disordered" evidence="2">
    <location>
        <begin position="1"/>
        <end position="162"/>
    </location>
</feature>
<feature type="compositionally biased region" description="Basic and acidic residues" evidence="2">
    <location>
        <begin position="22"/>
        <end position="37"/>
    </location>
</feature>
<feature type="compositionally biased region" description="Basic and acidic residues" evidence="2">
    <location>
        <begin position="47"/>
        <end position="64"/>
    </location>
</feature>
<feature type="compositionally biased region" description="Polar residues" evidence="2">
    <location>
        <begin position="65"/>
        <end position="74"/>
    </location>
</feature>
<feature type="compositionally biased region" description="Polar residues" evidence="2">
    <location>
        <begin position="81"/>
        <end position="110"/>
    </location>
</feature>
<feature type="compositionally biased region" description="Basic and acidic residues" evidence="2">
    <location>
        <begin position="122"/>
        <end position="142"/>
    </location>
</feature>
<feature type="compositionally biased region" description="Basic and acidic residues" evidence="2">
    <location>
        <begin position="151"/>
        <end position="162"/>
    </location>
</feature>
<comment type="function">
    <text evidence="1">Proteins GvpF to GvpM might be involved in nucleating gas vesicle formation. A minor component of the gas vesicle (By similarity). Gas vesicles are hollow, gas filled proteinaceous nanostructures found in some microorganisms. They allow positioning of halobacteria at the optimal depth for growth in the poorly aerated, shallow brine pools of their habitat (By similarity).</text>
</comment>
<comment type="function">
    <text evidence="3 4">Expression of a 9.5 kb mc-vac DNA fragment containing 2 divergently transcribed regions (gvpD-gvpE-gvpF-gvpG-gvpH-gvpI-gvpJ-gvpK-gvpL-gvpM and gvpA-gvpC-gvpN-gvpO) allows H.volcanii to produce gas vesicles.</text>
</comment>
<comment type="subunit">
    <text evidence="1">GvpF to GvpM interact with each other in vitro, and may form multi-subunit complex(es). Interacts with GvpC and GvpO.</text>
</comment>
<comment type="subcellular location">
    <subcellularLocation>
        <location evidence="1">Gas vesicle</location>
    </subcellularLocation>
</comment>
<comment type="induction">
    <text evidence="3 4">Transcribed from early-log phase, decreases as cells enter stationary phase, probably as a long gvpF-gvpM RNA (PubMed:1404376). Highly expressed in 25% salt, poorly expressed in 15% salt, no gas vesicles are formed at 15% salt (PubMed:8757736).</text>
</comment>
<comment type="miscellaneous">
    <text evidence="3">Encoded in a 14-gene locus called mc-vac.</text>
</comment>
<comment type="similarity">
    <text evidence="6">Belongs to the gas vesicle GvpI family.</text>
</comment>
<reference key="1">
    <citation type="journal article" date="1992" name="J. Mol. Biol.">
        <title>Three different but related gene clusters encoding gas vesicles in halophilic archaea.</title>
        <authorList>
            <person name="Englert C."/>
            <person name="Krueger K."/>
            <person name="Offner S."/>
            <person name="Pfeifer F."/>
        </authorList>
    </citation>
    <scope>NUCLEOTIDE SEQUENCE [GENOMIC DNA]</scope>
    <scope>INDUCTION</scope>
    <scope>GAS VESICLE GENE CLUSTER</scope>
    <source>
        <strain>ATCC 33500 / DSM 1411 / JCM 8866 / NBRC 14739 / NCIMB 2177 / R-4</strain>
    </source>
</reference>
<reference key="2">
    <citation type="journal article" date="2012" name="J. Bacteriol.">
        <title>Complete genome sequence of the metabolically versatile halophilic archaeon Haloferax mediterranei, a poly(3-hydroxybutyrate-co-3-hydroxyvalerate) producer.</title>
        <authorList>
            <person name="Han J."/>
            <person name="Zhang F."/>
            <person name="Hou J."/>
            <person name="Liu X."/>
            <person name="Li M."/>
            <person name="Liu H."/>
            <person name="Cai L."/>
            <person name="Zhang B."/>
            <person name="Chen Y."/>
            <person name="Zhou J."/>
            <person name="Hu S."/>
            <person name="Xiang H."/>
        </authorList>
    </citation>
    <scope>NUCLEOTIDE SEQUENCE [LARGE SCALE GENOMIC DNA]</scope>
    <source>
        <strain>ATCC 33500 / DSM 1411 / JCM 8866 / NBRC 14739 / NCIMB 2177 / R-4</strain>
    </source>
</reference>
<reference key="3">
    <citation type="journal article" date="1996" name="Microbiology">
        <title>Influence of salt on the transcription of the gas-vesicle genes of Haloferax mediterranei and identification of the endogenous transcriptional activator gene.</title>
        <authorList>
            <person name="Roeder R."/>
            <person name="Pfeifer F."/>
        </authorList>
    </citation>
    <scope>INDUCTION BY SALT</scope>
    <source>
        <strain>ATCC 33500 / DSM 1411 / JCM 8866 / NBRC 14739 / NCIMB 2177 / R-4</strain>
    </source>
</reference>
<accession>Q02234</accession>
<accession>I3R598</accession>
<protein>
    <recommendedName>
        <fullName>Gas vesicle protein I</fullName>
        <shortName>GvpI</shortName>
    </recommendedName>
</protein>
<name>GVPI_HALMT</name>
<proteinExistence type="evidence at transcript level"/>
<organism>
    <name type="scientific">Haloferax mediterranei (strain ATCC 33500 / DSM 1411 / JCM 8866 / NBRC 14739 / NCIMB 2177 / R-4)</name>
    <name type="common">Halobacterium mediterranei</name>
    <dbReference type="NCBI Taxonomy" id="523841"/>
    <lineage>
        <taxon>Archaea</taxon>
        <taxon>Methanobacteriati</taxon>
        <taxon>Methanobacteriota</taxon>
        <taxon>Stenosarchaea group</taxon>
        <taxon>Halobacteria</taxon>
        <taxon>Halobacteriales</taxon>
        <taxon>Haloferacaceae</taxon>
        <taxon>Haloferax</taxon>
    </lineage>
</organism>